<name>DCAS_AGRSK</name>
<comment type="function">
    <text>The enzyme catalyzes the hydrolysis of N-carbamoyl-D-amino acids to the corresponding which are useful intermediates in the preparation of beta-lactam antibiotics. Industrial production of beta-lactam antibiotics is now being developed using this enzyme.</text>
</comment>
<comment type="catalytic activity">
    <reaction>
        <text>an N-carbamoyl-D-amino acid + H2O + 2 H(+) = a D-alpha-amino acid + NH4(+) + CO2</text>
        <dbReference type="Rhea" id="RHEA:11000"/>
        <dbReference type="ChEBI" id="CHEBI:15377"/>
        <dbReference type="ChEBI" id="CHEBI:15378"/>
        <dbReference type="ChEBI" id="CHEBI:16526"/>
        <dbReference type="ChEBI" id="CHEBI:28938"/>
        <dbReference type="ChEBI" id="CHEBI:59871"/>
        <dbReference type="ChEBI" id="CHEBI:85602"/>
        <dbReference type="EC" id="3.5.1.77"/>
    </reaction>
</comment>
<accession>P60327</accession>
<evidence type="ECO:0000255" key="1">
    <source>
        <dbReference type="PROSITE-ProRule" id="PRU00054"/>
    </source>
</evidence>
<evidence type="ECO:0007829" key="2">
    <source>
        <dbReference type="PDB" id="1UF4"/>
    </source>
</evidence>
<evidence type="ECO:0007829" key="3">
    <source>
        <dbReference type="PDB" id="1UF5"/>
    </source>
</evidence>
<dbReference type="EC" id="3.5.1.77"/>
<dbReference type="EMBL" id="AB007368">
    <property type="protein sequence ID" value="BAD00007.1"/>
    <property type="molecule type" value="Genomic_DNA"/>
</dbReference>
<dbReference type="PIR" id="JW0082">
    <property type="entry name" value="JW0082"/>
</dbReference>
<dbReference type="PDB" id="1ERZ">
    <property type="method" value="X-ray"/>
    <property type="resolution" value="1.70 A"/>
    <property type="chains" value="A/B=2-304"/>
</dbReference>
<dbReference type="PDB" id="1UF4">
    <property type="method" value="X-ray"/>
    <property type="resolution" value="2.15 A"/>
    <property type="chains" value="A/B=2-304"/>
</dbReference>
<dbReference type="PDB" id="1UF5">
    <property type="method" value="X-ray"/>
    <property type="resolution" value="1.60 A"/>
    <property type="chains" value="A/B=2-304"/>
</dbReference>
<dbReference type="PDB" id="1UF7">
    <property type="method" value="X-ray"/>
    <property type="resolution" value="1.90 A"/>
    <property type="chains" value="A/B=2-304"/>
</dbReference>
<dbReference type="PDB" id="1UF8">
    <property type="method" value="X-ray"/>
    <property type="resolution" value="1.80 A"/>
    <property type="chains" value="A/B=2-304"/>
</dbReference>
<dbReference type="PDB" id="8HPC">
    <property type="method" value="X-ray"/>
    <property type="resolution" value="2.52 A"/>
    <property type="chains" value="A/B/C/D/E/F/G/H=1-304"/>
</dbReference>
<dbReference type="PDBsum" id="1ERZ"/>
<dbReference type="PDBsum" id="1UF4"/>
<dbReference type="PDBsum" id="1UF5"/>
<dbReference type="PDBsum" id="1UF7"/>
<dbReference type="PDBsum" id="1UF8"/>
<dbReference type="PDBsum" id="8HPC"/>
<dbReference type="SMR" id="P60327"/>
<dbReference type="DrugBank" id="DB04058">
    <property type="generic name" value="N-Carbamoylphenylalanine"/>
</dbReference>
<dbReference type="DrugBank" id="DB03364">
    <property type="generic name" value="N-Carbamyl-D-Methionine"/>
</dbReference>
<dbReference type="DrugBank" id="DB01847">
    <property type="generic name" value="N-Carbamyl-D-Valine"/>
</dbReference>
<dbReference type="EvolutionaryTrace" id="P60327"/>
<dbReference type="GO" id="GO:0047417">
    <property type="term" value="F:N-carbamoyl-D-amino acid hydrolase activity"/>
    <property type="evidence" value="ECO:0007669"/>
    <property type="project" value="UniProtKB-EC"/>
</dbReference>
<dbReference type="CDD" id="cd07569">
    <property type="entry name" value="DCase"/>
    <property type="match status" value="1"/>
</dbReference>
<dbReference type="FunFam" id="3.60.110.10:FF:000047">
    <property type="entry name" value="N-carbamoyl-D-amino acid hydrolase"/>
    <property type="match status" value="1"/>
</dbReference>
<dbReference type="Gene3D" id="3.60.110.10">
    <property type="entry name" value="Carbon-nitrogen hydrolase"/>
    <property type="match status" value="1"/>
</dbReference>
<dbReference type="InterPro" id="IPR050345">
    <property type="entry name" value="Aliph_Amidase/BUP"/>
</dbReference>
<dbReference type="InterPro" id="IPR003010">
    <property type="entry name" value="C-N_Hydrolase"/>
</dbReference>
<dbReference type="InterPro" id="IPR036526">
    <property type="entry name" value="C-N_Hydrolase_sf"/>
</dbReference>
<dbReference type="PANTHER" id="PTHR43674">
    <property type="entry name" value="NITRILASE C965.09-RELATED"/>
    <property type="match status" value="1"/>
</dbReference>
<dbReference type="PANTHER" id="PTHR43674:SF12">
    <property type="entry name" value="NITRILASE C965.09-RELATED"/>
    <property type="match status" value="1"/>
</dbReference>
<dbReference type="Pfam" id="PF00795">
    <property type="entry name" value="CN_hydrolase"/>
    <property type="match status" value="1"/>
</dbReference>
<dbReference type="SUPFAM" id="SSF56317">
    <property type="entry name" value="Carbon-nitrogen hydrolase"/>
    <property type="match status" value="1"/>
</dbReference>
<dbReference type="PROSITE" id="PS50263">
    <property type="entry name" value="CN_HYDROLASE"/>
    <property type="match status" value="1"/>
</dbReference>
<proteinExistence type="evidence at protein level"/>
<sequence length="304" mass="34285">MTRQMILAVGQQGPIARAETREQVVVRLLDMLTKAASRGANFIVFPELALTTFFPRWHFTDEAELDSFYETEMPGPVVRPLFEKAAELGIGFNLGYAELVVEGGVKRRFNTSILVDKSGKIVGKYRKIHLPGHKEYEAYRPFQHLEKRYFEPGDLGFPVYDVDAAKMGMFICNDRRWPEAWRVMGLRGAEIICGGYNTPTHNPPVPQHDHLTSFHHLLSMQAGSYQNGAWSAAAGKVGMEENCMLLGHSCIVAPTGEIVALTTTLEDEVITAAVDLDRCRELREHIFNFKQHRQPQHYGLIAEL</sequence>
<keyword id="KW-0002">3D-structure</keyword>
<keyword id="KW-0378">Hydrolase</keyword>
<reference key="1">
    <citation type="journal article" date="1998" name="Biosci. Biotechnol. Biochem.">
        <title>Isolation of Agrobacterium sp. strain KNK712 that produces N-carbamyl-D-amino acid amidohydrolase, cloning of the gene for this enzyme, and properties of the enzyme.</title>
        <authorList>
            <person name="Nanba H."/>
            <person name="Ikenaka Y."/>
            <person name="Yamada Y."/>
            <person name="Yajima K."/>
            <person name="Takano M."/>
            <person name="Takahashi S."/>
        </authorList>
    </citation>
    <scope>NUCLEOTIDE SEQUENCE [GENOMIC DNA]</scope>
</reference>
<reference key="2">
    <citation type="journal article" date="2000" name="Structure">
        <title>Crystal structure of N-carbamyl-D-amino acid amidohydrolase with a novel catalytic framework common to amidohydrolases.</title>
        <authorList>
            <person name="Nakai T."/>
            <person name="Hasegawa T."/>
            <person name="Yamashita E."/>
            <person name="Yamamoto M."/>
            <person name="Kumasaka T."/>
            <person name="Ueki T."/>
            <person name="Nanba H."/>
            <person name="Ikenaka Y."/>
            <person name="Takahashi S."/>
            <person name="Sato M."/>
            <person name="Tsukihara T."/>
        </authorList>
    </citation>
    <scope>X-RAY CRYSTALLOGRAPHY (1.7 ANGSTROMS)</scope>
</reference>
<organism>
    <name type="scientific">Agrobacterium sp. (strain KNK712)</name>
    <dbReference type="NCBI Taxonomy" id="252128"/>
    <lineage>
        <taxon>Bacteria</taxon>
        <taxon>Pseudomonadati</taxon>
        <taxon>Pseudomonadota</taxon>
        <taxon>Alphaproteobacteria</taxon>
        <taxon>Hyphomicrobiales</taxon>
        <taxon>Rhizobiaceae</taxon>
        <taxon>Rhizobium/Agrobacterium group</taxon>
        <taxon>Agrobacterium</taxon>
    </lineage>
</organism>
<protein>
    <recommendedName>
        <fullName>N-carbamoyl-D-amino acid hydrolase</fullName>
        <ecNumber>3.5.1.77</ecNumber>
    </recommendedName>
    <alternativeName>
        <fullName>D-N-alpha-carbamilase</fullName>
    </alternativeName>
</protein>
<feature type="chain" id="PRO_0000079800" description="N-carbamoyl-D-amino acid hydrolase">
    <location>
        <begin position="1"/>
        <end position="304"/>
    </location>
</feature>
<feature type="domain" description="CN hydrolase" evidence="1">
    <location>
        <begin position="5"/>
        <end position="276"/>
    </location>
</feature>
<feature type="active site">
    <location>
        <position position="47"/>
    </location>
</feature>
<feature type="active site">
    <location>
        <position position="127"/>
    </location>
</feature>
<feature type="active site">
    <location>
        <position position="172"/>
    </location>
</feature>
<feature type="strand" evidence="3">
    <location>
        <begin position="4"/>
        <end position="12"/>
    </location>
</feature>
<feature type="helix" evidence="3">
    <location>
        <begin position="21"/>
        <end position="37"/>
    </location>
</feature>
<feature type="strand" evidence="3">
    <location>
        <begin position="41"/>
        <end position="44"/>
    </location>
</feature>
<feature type="turn" evidence="3">
    <location>
        <begin position="47"/>
        <end position="50"/>
    </location>
</feature>
<feature type="helix" evidence="3">
    <location>
        <begin position="54"/>
        <end position="56"/>
    </location>
</feature>
<feature type="helix" evidence="3">
    <location>
        <begin position="62"/>
        <end position="66"/>
    </location>
</feature>
<feature type="strand" evidence="3">
    <location>
        <begin position="69"/>
        <end position="74"/>
    </location>
</feature>
<feature type="turn" evidence="3">
    <location>
        <begin position="76"/>
        <end position="78"/>
    </location>
</feature>
<feature type="helix" evidence="3">
    <location>
        <begin position="79"/>
        <end position="88"/>
    </location>
</feature>
<feature type="strand" evidence="3">
    <location>
        <begin position="91"/>
        <end position="102"/>
    </location>
</feature>
<feature type="strand" evidence="3">
    <location>
        <begin position="105"/>
        <end position="115"/>
    </location>
</feature>
<feature type="strand" evidence="3">
    <location>
        <begin position="121"/>
        <end position="126"/>
    </location>
</feature>
<feature type="strand" evidence="2">
    <location>
        <begin position="140"/>
        <end position="142"/>
    </location>
</feature>
<feature type="helix" evidence="3">
    <location>
        <begin position="146"/>
        <end position="149"/>
    </location>
</feature>
<feature type="strand" evidence="3">
    <location>
        <begin position="159"/>
        <end position="162"/>
    </location>
</feature>
<feature type="strand" evidence="3">
    <location>
        <begin position="165"/>
        <end position="169"/>
    </location>
</feature>
<feature type="helix" evidence="3">
    <location>
        <begin position="172"/>
        <end position="176"/>
    </location>
</feature>
<feature type="helix" evidence="3">
    <location>
        <begin position="178"/>
        <end position="186"/>
    </location>
</feature>
<feature type="strand" evidence="3">
    <location>
        <begin position="190"/>
        <end position="196"/>
    </location>
</feature>
<feature type="helix" evidence="3">
    <location>
        <begin position="206"/>
        <end position="211"/>
    </location>
</feature>
<feature type="helix" evidence="3">
    <location>
        <begin position="212"/>
        <end position="227"/>
    </location>
</feature>
<feature type="strand" evidence="3">
    <location>
        <begin position="230"/>
        <end position="236"/>
    </location>
</feature>
<feature type="strand" evidence="3">
    <location>
        <begin position="238"/>
        <end position="240"/>
    </location>
</feature>
<feature type="strand" evidence="3">
    <location>
        <begin position="243"/>
        <end position="245"/>
    </location>
</feature>
<feature type="strand" evidence="3">
    <location>
        <begin position="250"/>
        <end position="252"/>
    </location>
</feature>
<feature type="strand" evidence="3">
    <location>
        <begin position="258"/>
        <end position="261"/>
    </location>
</feature>
<feature type="strand" evidence="3">
    <location>
        <begin position="264"/>
        <end position="275"/>
    </location>
</feature>
<feature type="helix" evidence="3">
    <location>
        <begin position="276"/>
        <end position="279"/>
    </location>
</feature>
<feature type="helix" evidence="3">
    <location>
        <begin position="280"/>
        <end position="283"/>
    </location>
</feature>
<feature type="turn" evidence="3">
    <location>
        <begin position="284"/>
        <end position="287"/>
    </location>
</feature>
<feature type="helix" evidence="3">
    <location>
        <begin position="289"/>
        <end position="292"/>
    </location>
</feature>
<feature type="helix" evidence="3">
    <location>
        <begin position="295"/>
        <end position="297"/>
    </location>
</feature>
<feature type="helix" evidence="3">
    <location>
        <begin position="299"/>
        <end position="302"/>
    </location>
</feature>